<sequence>MATSSVSKGCFVFKPNFKKRKISVPIEDYFNKGKNESEDSKLRFETYHLMWEQMKCETERLQEELNKNLFDSLIEFLQKSHTGFKKNSGDWGHQIKHREIPVAALVLGVNVTDHDLIFRSLTEALQNNVTPYVVSLQAKDCPDMKHFLQKLISQLMACCVDAKPKEKESIQVTQKMTHCSMDPLSSWYMTVTQKTHPKISGKKRTTSSKWQSPPVVLILKDMESFTTKILQDFIIISSQHLHEFPLILIFGIATSPIIIHRLLPHAVSSLLCIELFQSLPCKEHLTTVLDKLLLTAQFPFKISEKVLQILTNIFLYHDFSIQNFVKGLQLSLLEHFYSQPLSVLCCSLPEAKRRINFLSAHQCENIRRLPSFRRYVEKQVSEKQVALLTNERFLKEETQSLLENLHVYHTNYFLVLRCLHNFTSSLPKYPLGRQIRELYCTCLEKNIWDSEEYASALQLLRMLARDDLMTILQKCFKVFKSSSEKQLGSTAKRIEEFLAQFQSLDADAKEEEDASGSQPKGLQKTDLYHLQKSLLEMKELRRTSKKQTRFEVLREKVVNFIDCLVREYLLPPETQPLHEVVYFSAAHTLREHLNAAPRIALHTALNDPYFYIKNEALKSEEGCIPNIAPDICIAYKLHLECSRLINLVDWSEAFATVVTAAEKMESNSATTEEMNEIIHARFIRAVSELELLGFIKPTKQKTDHVARLTWGGC</sequence>
<gene>
    <name type="primary">ORC3</name>
    <name type="synonym">ORC3L</name>
</gene>
<keyword id="KW-0235">DNA replication</keyword>
<keyword id="KW-0238">DNA-binding</keyword>
<keyword id="KW-0539">Nucleus</keyword>
<keyword id="KW-0597">Phosphoprotein</keyword>
<feature type="chain" id="PRO_0000250499" description="Origin recognition complex subunit 3">
    <location>
        <begin position="1"/>
        <end position="713"/>
    </location>
</feature>
<feature type="modified residue" description="Phosphoserine" evidence="2">
    <location>
        <position position="23"/>
    </location>
</feature>
<feature type="modified residue" description="Phosphoserine" evidence="2">
    <location>
        <position position="517"/>
    </location>
</feature>
<reference key="1">
    <citation type="submission" date="2004-09" db="EMBL/GenBank/DDBJ databases">
        <title>Molecular cloning of origin recognition complex (ORC3) of Spermophilus citellus.</title>
        <authorList>
            <person name="Stieler J.T."/>
            <person name="Bruckner M.K."/>
            <person name="Strijkstra A.M."/>
        </authorList>
    </citation>
    <scope>NUCLEOTIDE SEQUENCE [MRNA]</scope>
</reference>
<comment type="function">
    <text evidence="1">Component of the origin recognition complex (ORC) that binds origins of replication. DNA-binding is ATP-dependent. The specific DNA sequences that define origins of replication have not been identified yet. ORC is required to assemble the pre-replication complex necessary to initiate DNA replication (By similarity). Binds histone H3 and H4 trimethylation marks H3K9me3, H3K27me3 and H4K20me3 (By similarity).</text>
</comment>
<comment type="subunit">
    <text evidence="1">Component of ORC, a complex composed of at least 6 subunits: ORC1, ORC2, ORC3, ORC4, ORC5 and ORC6. ORC is regulated in a cell-cycle dependent manner. It is sequentially assembled at the exit from anaphase of mitosis and disassembled as cells enter S phase (By similarity).</text>
</comment>
<comment type="subcellular location">
    <subcellularLocation>
        <location evidence="1">Nucleus</location>
    </subcellularLocation>
</comment>
<comment type="similarity">
    <text evidence="3">Belongs to the ORC3 family.</text>
</comment>
<organism>
    <name type="scientific">Spermophilus citellus</name>
    <name type="common">European ground squirrel</name>
    <name type="synonym">Citellus citellus</name>
    <dbReference type="NCBI Taxonomy" id="9997"/>
    <lineage>
        <taxon>Eukaryota</taxon>
        <taxon>Metazoa</taxon>
        <taxon>Chordata</taxon>
        <taxon>Craniata</taxon>
        <taxon>Vertebrata</taxon>
        <taxon>Euteleostomi</taxon>
        <taxon>Mammalia</taxon>
        <taxon>Eutheria</taxon>
        <taxon>Euarchontoglires</taxon>
        <taxon>Glires</taxon>
        <taxon>Rodentia</taxon>
        <taxon>Sciuromorpha</taxon>
        <taxon>Sciuridae</taxon>
        <taxon>Xerinae</taxon>
        <taxon>Marmotini</taxon>
        <taxon>Spermophilus</taxon>
    </lineage>
</organism>
<dbReference type="EMBL" id="AY743329">
    <property type="protein sequence ID" value="AAV59465.1"/>
    <property type="molecule type" value="mRNA"/>
</dbReference>
<dbReference type="SMR" id="Q5DJU3"/>
<dbReference type="GO" id="GO:0031261">
    <property type="term" value="C:DNA replication preinitiation complex"/>
    <property type="evidence" value="ECO:0007669"/>
    <property type="project" value="TreeGrafter"/>
</dbReference>
<dbReference type="GO" id="GO:0005664">
    <property type="term" value="C:nuclear origin of replication recognition complex"/>
    <property type="evidence" value="ECO:0000250"/>
    <property type="project" value="UniProtKB"/>
</dbReference>
<dbReference type="GO" id="GO:0005656">
    <property type="term" value="C:nuclear pre-replicative complex"/>
    <property type="evidence" value="ECO:0007669"/>
    <property type="project" value="TreeGrafter"/>
</dbReference>
<dbReference type="GO" id="GO:0003688">
    <property type="term" value="F:DNA replication origin binding"/>
    <property type="evidence" value="ECO:0007669"/>
    <property type="project" value="TreeGrafter"/>
</dbReference>
<dbReference type="GO" id="GO:0006270">
    <property type="term" value="P:DNA replication initiation"/>
    <property type="evidence" value="ECO:0007669"/>
    <property type="project" value="TreeGrafter"/>
</dbReference>
<dbReference type="CDD" id="cd20704">
    <property type="entry name" value="Orc3"/>
    <property type="match status" value="2"/>
</dbReference>
<dbReference type="InterPro" id="IPR020795">
    <property type="entry name" value="ORC3"/>
</dbReference>
<dbReference type="InterPro" id="IPR045663">
    <property type="entry name" value="ORC3_ins"/>
</dbReference>
<dbReference type="InterPro" id="IPR045667">
    <property type="entry name" value="ORC3_N"/>
</dbReference>
<dbReference type="InterPro" id="IPR040855">
    <property type="entry name" value="ORC_WH_C"/>
</dbReference>
<dbReference type="PANTHER" id="PTHR12748">
    <property type="entry name" value="ORIGIN RECOGNITION COMPLEX SUBUNIT 3"/>
    <property type="match status" value="1"/>
</dbReference>
<dbReference type="PANTHER" id="PTHR12748:SF0">
    <property type="entry name" value="ORIGIN RECOGNITION COMPLEX SUBUNIT 3"/>
    <property type="match status" value="1"/>
</dbReference>
<dbReference type="Pfam" id="PF19675">
    <property type="entry name" value="ORC3_ins"/>
    <property type="match status" value="1"/>
</dbReference>
<dbReference type="Pfam" id="PF07034">
    <property type="entry name" value="ORC3_N"/>
    <property type="match status" value="1"/>
</dbReference>
<dbReference type="Pfam" id="PF18137">
    <property type="entry name" value="ORC_WH_C"/>
    <property type="match status" value="1"/>
</dbReference>
<evidence type="ECO:0000250" key="1"/>
<evidence type="ECO:0000250" key="2">
    <source>
        <dbReference type="UniProtKB" id="Q9UBD5"/>
    </source>
</evidence>
<evidence type="ECO:0000305" key="3"/>
<accession>Q5DJU3</accession>
<protein>
    <recommendedName>
        <fullName>Origin recognition complex subunit 3</fullName>
    </recommendedName>
</protein>
<name>ORC3_SPECI</name>
<proteinExistence type="evidence at transcript level"/>